<gene>
    <name type="primary">ERD6</name>
    <name type="synonym">SUGTL1</name>
    <name type="ordered locus">At1g08930</name>
    <name type="ORF">F7G19.19</name>
</gene>
<accession>O04036</accession>
<accession>O65799</accession>
<evidence type="ECO:0000250" key="1"/>
<evidence type="ECO:0000255" key="2"/>
<evidence type="ECO:0000269" key="3">
    <source>
    </source>
</evidence>
<evidence type="ECO:0000269" key="4">
    <source>
    </source>
</evidence>
<evidence type="ECO:0000305" key="5"/>
<evidence type="ECO:0007744" key="6">
    <source>
    </source>
</evidence>
<feature type="chain" id="PRO_0000259853" description="Sugar transporter ERD6">
    <location>
        <begin position="1"/>
        <end position="496"/>
    </location>
</feature>
<feature type="transmembrane region" description="Helical; Name=1" evidence="2">
    <location>
        <begin position="58"/>
        <end position="78"/>
    </location>
</feature>
<feature type="transmembrane region" description="Helical; Name=2" evidence="2">
    <location>
        <begin position="94"/>
        <end position="114"/>
    </location>
</feature>
<feature type="transmembrane region" description="Helical; Name=3" evidence="2">
    <location>
        <begin position="128"/>
        <end position="148"/>
    </location>
</feature>
<feature type="transmembrane region" description="Helical; Name=4" evidence="2">
    <location>
        <begin position="156"/>
        <end position="176"/>
    </location>
</feature>
<feature type="transmembrane region" description="Helical; Name=5" evidence="2">
    <location>
        <begin position="183"/>
        <end position="203"/>
    </location>
</feature>
<feature type="transmembrane region" description="Helical; Name=6" evidence="2">
    <location>
        <begin position="211"/>
        <end position="231"/>
    </location>
</feature>
<feature type="transmembrane region" description="Helical; Name=7" evidence="2">
    <location>
        <begin position="292"/>
        <end position="312"/>
    </location>
</feature>
<feature type="transmembrane region" description="Helical; Name=8" evidence="2">
    <location>
        <begin position="329"/>
        <end position="349"/>
    </location>
</feature>
<feature type="transmembrane region" description="Helical; Name=9" evidence="2">
    <location>
        <begin position="364"/>
        <end position="384"/>
    </location>
</feature>
<feature type="transmembrane region" description="Helical; Name=10" evidence="2">
    <location>
        <begin position="394"/>
        <end position="414"/>
    </location>
</feature>
<feature type="transmembrane region" description="Helical; Name=11" evidence="2">
    <location>
        <begin position="430"/>
        <end position="450"/>
    </location>
</feature>
<feature type="transmembrane region" description="Helical; Name=12" evidence="2">
    <location>
        <begin position="456"/>
        <end position="476"/>
    </location>
</feature>
<feature type="modified residue" description="Phosphoserine" evidence="6">
    <location>
        <position position="256"/>
    </location>
</feature>
<organism>
    <name type="scientific">Arabidopsis thaliana</name>
    <name type="common">Mouse-ear cress</name>
    <dbReference type="NCBI Taxonomy" id="3702"/>
    <lineage>
        <taxon>Eukaryota</taxon>
        <taxon>Viridiplantae</taxon>
        <taxon>Streptophyta</taxon>
        <taxon>Embryophyta</taxon>
        <taxon>Tracheophyta</taxon>
        <taxon>Spermatophyta</taxon>
        <taxon>Magnoliopsida</taxon>
        <taxon>eudicotyledons</taxon>
        <taxon>Gunneridae</taxon>
        <taxon>Pentapetalae</taxon>
        <taxon>rosids</taxon>
        <taxon>malvids</taxon>
        <taxon>Brassicales</taxon>
        <taxon>Brassicaceae</taxon>
        <taxon>Camelineae</taxon>
        <taxon>Arabidopsis</taxon>
    </lineage>
</organism>
<sequence>MERQKSMEKGLLRKSLSIRERKFPNEDAFLESGLSRKSPREVKKPQNDDGECRVTASVFLSTFVAVSGSFCTGCGVGFSSGAQAGITKDLSLSVAEYSMFGSILTLGGLIGAVFSGKVADVLGRKRTMLFCEFFCITGWLCVALAQNAMWLDCGRLLLGIGVGIFSYVIPVYIAEIAPKHVRGSFVFANQLMQNCGISLFFIIGNFIPWRLLTVVGLVPCVFHVFCLFFIPESPRWLAKLGRDKECRSSLQRLRGSDVDISREANTIRDTIDMTENGGETKMSELFQRRYAYPLIIGVGLMFLQQLCGSSGVTYYASSLFNKGGFPSAIGTSVIATIMVPKAMLATVLVDKMGRRTLLMASCSAMGLSALLLSVSYGFQSFGILPELTPIFTCIGVLGHIVSFAMGMGGLPWIIMAEIFPMNVKVSAGTLVTVTNWLFGWIITYTFNFMLEWNASGMFLIFSMVSASSIVFIYFLVPETKGRSLEEIQALLNNSVQ</sequence>
<name>ERD6_ARATH</name>
<protein>
    <recommendedName>
        <fullName>Sugar transporter ERD6</fullName>
    </recommendedName>
    <alternativeName>
        <fullName>Early-responsive to dehydration protein 6</fullName>
    </alternativeName>
    <alternativeName>
        <fullName>Sugar transporter-like protein 1</fullName>
    </alternativeName>
</protein>
<proteinExistence type="evidence at protein level"/>
<comment type="function">
    <text evidence="5">Sugar transporter.</text>
</comment>
<comment type="subcellular location">
    <subcellularLocation>
        <location evidence="1">Membrane</location>
        <topology evidence="1">Multi-pass membrane protein</topology>
    </subcellularLocation>
</comment>
<comment type="tissue specificity">
    <text evidence="3">Expressed in both shoots and roots. In roots, expressed in epidermal cells and especially strongly in cortex cells. In flowers, expressed in sepals.</text>
</comment>
<comment type="induction">
    <text evidence="3 4">By dehydration and cold treatment (PubMed:9545564). By drought and high salinity conditions, with maximal expression after 1 and 2 hours of exposure to these conditions. Expression in leaves decreases after exposure to the high salinity and abscisic acid (ABA) treatment, but expression in roots remain at a constant level (PubMed:19901034).</text>
</comment>
<comment type="similarity">
    <text evidence="5">Belongs to the major facilitator superfamily. Sugar transporter (TC 2.A.1.1) family.</text>
</comment>
<comment type="sequence caution" evidence="5">
    <conflict type="erroneous gene model prediction">
        <sequence resource="EMBL-CDS" id="AAB70420"/>
    </conflict>
</comment>
<reference key="1">
    <citation type="journal article" date="1998" name="Biochim. Biophys. Acta">
        <title>ERD6, a cDNA clone for an early dehydration-induced gene of Arabidopsis, encodes a putative sugar transporter.</title>
        <authorList>
            <person name="Kiyosue T."/>
            <person name="Abe H."/>
            <person name="Yamaguchi-Shinozaki K."/>
            <person name="Shinozaki K."/>
        </authorList>
    </citation>
    <scope>NUCLEOTIDE SEQUENCE [MRNA]</scope>
    <scope>INDUCTION</scope>
</reference>
<reference key="2">
    <citation type="submission" date="1999-10" db="EMBL/GenBank/DDBJ databases">
        <title>A novel multigene family in Arabidopsis thaliana coding for putative sugar transporters.</title>
        <authorList>
            <person name="Gy I."/>
            <person name="Kreis M."/>
            <person name="Lecharny A."/>
        </authorList>
    </citation>
    <scope>NUCLEOTIDE SEQUENCE [MRNA]</scope>
</reference>
<reference key="3">
    <citation type="journal article" date="2000" name="Nature">
        <title>Sequence and analysis of chromosome 1 of the plant Arabidopsis thaliana.</title>
        <authorList>
            <person name="Theologis A."/>
            <person name="Ecker J.R."/>
            <person name="Palm C.J."/>
            <person name="Federspiel N.A."/>
            <person name="Kaul S."/>
            <person name="White O."/>
            <person name="Alonso J."/>
            <person name="Altafi H."/>
            <person name="Araujo R."/>
            <person name="Bowman C.L."/>
            <person name="Brooks S.Y."/>
            <person name="Buehler E."/>
            <person name="Chan A."/>
            <person name="Chao Q."/>
            <person name="Chen H."/>
            <person name="Cheuk R.F."/>
            <person name="Chin C.W."/>
            <person name="Chung M.K."/>
            <person name="Conn L."/>
            <person name="Conway A.B."/>
            <person name="Conway A.R."/>
            <person name="Creasy T.H."/>
            <person name="Dewar K."/>
            <person name="Dunn P."/>
            <person name="Etgu P."/>
            <person name="Feldblyum T.V."/>
            <person name="Feng J.-D."/>
            <person name="Fong B."/>
            <person name="Fujii C.Y."/>
            <person name="Gill J.E."/>
            <person name="Goldsmith A.D."/>
            <person name="Haas B."/>
            <person name="Hansen N.F."/>
            <person name="Hughes B."/>
            <person name="Huizar L."/>
            <person name="Hunter J.L."/>
            <person name="Jenkins J."/>
            <person name="Johnson-Hopson C."/>
            <person name="Khan S."/>
            <person name="Khaykin E."/>
            <person name="Kim C.J."/>
            <person name="Koo H.L."/>
            <person name="Kremenetskaia I."/>
            <person name="Kurtz D.B."/>
            <person name="Kwan A."/>
            <person name="Lam B."/>
            <person name="Langin-Hooper S."/>
            <person name="Lee A."/>
            <person name="Lee J.M."/>
            <person name="Lenz C.A."/>
            <person name="Li J.H."/>
            <person name="Li Y.-P."/>
            <person name="Lin X."/>
            <person name="Liu S.X."/>
            <person name="Liu Z.A."/>
            <person name="Luros J.S."/>
            <person name="Maiti R."/>
            <person name="Marziali A."/>
            <person name="Militscher J."/>
            <person name="Miranda M."/>
            <person name="Nguyen M."/>
            <person name="Nierman W.C."/>
            <person name="Osborne B.I."/>
            <person name="Pai G."/>
            <person name="Peterson J."/>
            <person name="Pham P.K."/>
            <person name="Rizzo M."/>
            <person name="Rooney T."/>
            <person name="Rowley D."/>
            <person name="Sakano H."/>
            <person name="Salzberg S.L."/>
            <person name="Schwartz J.R."/>
            <person name="Shinn P."/>
            <person name="Southwick A.M."/>
            <person name="Sun H."/>
            <person name="Tallon L.J."/>
            <person name="Tambunga G."/>
            <person name="Toriumi M.J."/>
            <person name="Town C.D."/>
            <person name="Utterback T."/>
            <person name="Van Aken S."/>
            <person name="Vaysberg M."/>
            <person name="Vysotskaia V.S."/>
            <person name="Walker M."/>
            <person name="Wu D."/>
            <person name="Yu G."/>
            <person name="Fraser C.M."/>
            <person name="Venter J.C."/>
            <person name="Davis R.W."/>
        </authorList>
    </citation>
    <scope>NUCLEOTIDE SEQUENCE [LARGE SCALE GENOMIC DNA]</scope>
    <source>
        <strain>cv. Columbia</strain>
    </source>
</reference>
<reference key="4">
    <citation type="journal article" date="2017" name="Plant J.">
        <title>Araport11: a complete reannotation of the Arabidopsis thaliana reference genome.</title>
        <authorList>
            <person name="Cheng C.Y."/>
            <person name="Krishnakumar V."/>
            <person name="Chan A.P."/>
            <person name="Thibaud-Nissen F."/>
            <person name="Schobel S."/>
            <person name="Town C.D."/>
        </authorList>
    </citation>
    <scope>GENOME REANNOTATION</scope>
    <source>
        <strain>cv. Columbia</strain>
    </source>
</reference>
<reference key="5">
    <citation type="journal article" date="2003" name="Science">
        <title>Empirical analysis of transcriptional activity in the Arabidopsis genome.</title>
        <authorList>
            <person name="Yamada K."/>
            <person name="Lim J."/>
            <person name="Dale J.M."/>
            <person name="Chen H."/>
            <person name="Shinn P."/>
            <person name="Palm C.J."/>
            <person name="Southwick A.M."/>
            <person name="Wu H.C."/>
            <person name="Kim C.J."/>
            <person name="Nguyen M."/>
            <person name="Pham P.K."/>
            <person name="Cheuk R.F."/>
            <person name="Karlin-Newmann G."/>
            <person name="Liu S.X."/>
            <person name="Lam B."/>
            <person name="Sakano H."/>
            <person name="Wu T."/>
            <person name="Yu G."/>
            <person name="Miranda M."/>
            <person name="Quach H.L."/>
            <person name="Tripp M."/>
            <person name="Chang C.H."/>
            <person name="Lee J.M."/>
            <person name="Toriumi M.J."/>
            <person name="Chan M.M."/>
            <person name="Tang C.C."/>
            <person name="Onodera C.S."/>
            <person name="Deng J.M."/>
            <person name="Akiyama K."/>
            <person name="Ansari Y."/>
            <person name="Arakawa T."/>
            <person name="Banh J."/>
            <person name="Banno F."/>
            <person name="Bowser L."/>
            <person name="Brooks S.Y."/>
            <person name="Carninci P."/>
            <person name="Chao Q."/>
            <person name="Choy N."/>
            <person name="Enju A."/>
            <person name="Goldsmith A.D."/>
            <person name="Gurjal M."/>
            <person name="Hansen N.F."/>
            <person name="Hayashizaki Y."/>
            <person name="Johnson-Hopson C."/>
            <person name="Hsuan V.W."/>
            <person name="Iida K."/>
            <person name="Karnes M."/>
            <person name="Khan S."/>
            <person name="Koesema E."/>
            <person name="Ishida J."/>
            <person name="Jiang P.X."/>
            <person name="Jones T."/>
            <person name="Kawai J."/>
            <person name="Kamiya A."/>
            <person name="Meyers C."/>
            <person name="Nakajima M."/>
            <person name="Narusaka M."/>
            <person name="Seki M."/>
            <person name="Sakurai T."/>
            <person name="Satou M."/>
            <person name="Tamse R."/>
            <person name="Vaysberg M."/>
            <person name="Wallender E.K."/>
            <person name="Wong C."/>
            <person name="Yamamura Y."/>
            <person name="Yuan S."/>
            <person name="Shinozaki K."/>
            <person name="Davis R.W."/>
            <person name="Theologis A."/>
            <person name="Ecker J.R."/>
        </authorList>
    </citation>
    <scope>NUCLEOTIDE SEQUENCE [LARGE SCALE MRNA]</scope>
    <source>
        <strain>cv. Columbia</strain>
    </source>
</reference>
<reference key="6">
    <citation type="journal article" date="2006" name="BMC Evol. Biol.">
        <title>The monosaccharide transporter gene family in land plants is ancient and shows differential subfamily expression and expansion across lineages.</title>
        <authorList>
            <person name="Johnson D.A."/>
            <person name="Hill J.P."/>
            <person name="Thomas M.A."/>
        </authorList>
    </citation>
    <scope>GENE FAMILY</scope>
</reference>
<reference key="7">
    <citation type="journal article" date="2009" name="Plant Physiol.">
        <title>Large-scale Arabidopsis phosphoproteome profiling reveals novel chloroplast kinase substrates and phosphorylation networks.</title>
        <authorList>
            <person name="Reiland S."/>
            <person name="Messerli G."/>
            <person name="Baerenfaller K."/>
            <person name="Gerrits B."/>
            <person name="Endler A."/>
            <person name="Grossmann J."/>
            <person name="Gruissem W."/>
            <person name="Baginsky S."/>
        </authorList>
    </citation>
    <scope>PHOSPHORYLATION [LARGE SCALE ANALYSIS] AT SER-256</scope>
    <scope>IDENTIFICATION BY MASS SPECTROMETRY [LARGE SCALE ANALYSIS]</scope>
</reference>
<reference key="8">
    <citation type="journal article" date="2010" name="J. Biol. Chem.">
        <title>Functional analysis of an Arabidopsis thaliana abiotic stress-inducible facilitated diffusion transporter for monosaccharides.</title>
        <authorList>
            <person name="Yamada K."/>
            <person name="Osakabe Y."/>
            <person name="Mizoi J."/>
            <person name="Nakashima K."/>
            <person name="Fujita Y."/>
            <person name="Shinozaki K."/>
            <person name="Yamaguchi-Shinozaki K."/>
        </authorList>
    </citation>
    <scope>TISSUE SPECIFICITY</scope>
    <scope>INDUCTION</scope>
</reference>
<keyword id="KW-0472">Membrane</keyword>
<keyword id="KW-0597">Phosphoprotein</keyword>
<keyword id="KW-1185">Reference proteome</keyword>
<keyword id="KW-0346">Stress response</keyword>
<keyword id="KW-0762">Sugar transport</keyword>
<keyword id="KW-0812">Transmembrane</keyword>
<keyword id="KW-1133">Transmembrane helix</keyword>
<keyword id="KW-0813">Transport</keyword>
<dbReference type="EMBL" id="D89051">
    <property type="protein sequence ID" value="BAA25989.1"/>
    <property type="molecule type" value="mRNA"/>
</dbReference>
<dbReference type="EMBL" id="AJ249967">
    <property type="protein sequence ID" value="CAB64732.1"/>
    <property type="molecule type" value="mRNA"/>
</dbReference>
<dbReference type="EMBL" id="AC000106">
    <property type="protein sequence ID" value="AAB70420.1"/>
    <property type="status" value="ALT_SEQ"/>
    <property type="molecule type" value="Genomic_DNA"/>
</dbReference>
<dbReference type="EMBL" id="CP002684">
    <property type="protein sequence ID" value="AEE28370.1"/>
    <property type="molecule type" value="Genomic_DNA"/>
</dbReference>
<dbReference type="EMBL" id="CP002684">
    <property type="protein sequence ID" value="AEE28371.1"/>
    <property type="molecule type" value="Genomic_DNA"/>
</dbReference>
<dbReference type="EMBL" id="BT008661">
    <property type="protein sequence ID" value="AAP40473.1"/>
    <property type="molecule type" value="mRNA"/>
</dbReference>
<dbReference type="PIR" id="B86221">
    <property type="entry name" value="B86221"/>
</dbReference>
<dbReference type="PIR" id="T52132">
    <property type="entry name" value="T52132"/>
</dbReference>
<dbReference type="RefSeq" id="NP_001031006.1">
    <property type="nucleotide sequence ID" value="NM_001035929.1"/>
</dbReference>
<dbReference type="RefSeq" id="NP_563830.1">
    <property type="nucleotide sequence ID" value="NM_100765.5"/>
</dbReference>
<dbReference type="SMR" id="O04036"/>
<dbReference type="BioGRID" id="22655">
    <property type="interactions" value="3"/>
</dbReference>
<dbReference type="FunCoup" id="O04036">
    <property type="interactions" value="1072"/>
</dbReference>
<dbReference type="IntAct" id="O04036">
    <property type="interactions" value="2"/>
</dbReference>
<dbReference type="STRING" id="3702.O04036"/>
<dbReference type="TCDB" id="2.A.1.1.97">
    <property type="family name" value="the major facilitator superfamily (mfs)"/>
</dbReference>
<dbReference type="iPTMnet" id="O04036"/>
<dbReference type="PaxDb" id="3702-AT1G08930.1"/>
<dbReference type="ProteomicsDB" id="220669"/>
<dbReference type="EnsemblPlants" id="AT1G08930.1">
    <property type="protein sequence ID" value="AT1G08930.1"/>
    <property type="gene ID" value="AT1G08930"/>
</dbReference>
<dbReference type="EnsemblPlants" id="AT1G08930.2">
    <property type="protein sequence ID" value="AT1G08930.2"/>
    <property type="gene ID" value="AT1G08930"/>
</dbReference>
<dbReference type="GeneID" id="837414"/>
<dbReference type="Gramene" id="AT1G08930.1">
    <property type="protein sequence ID" value="AT1G08930.1"/>
    <property type="gene ID" value="AT1G08930"/>
</dbReference>
<dbReference type="Gramene" id="AT1G08930.2">
    <property type="protein sequence ID" value="AT1G08930.2"/>
    <property type="gene ID" value="AT1G08930"/>
</dbReference>
<dbReference type="KEGG" id="ath:AT1G08930"/>
<dbReference type="Araport" id="AT1G08930"/>
<dbReference type="TAIR" id="AT1G08930">
    <property type="gene designation" value="ERD6"/>
</dbReference>
<dbReference type="eggNOG" id="KOG0254">
    <property type="taxonomic scope" value="Eukaryota"/>
</dbReference>
<dbReference type="HOGENOM" id="CLU_001265_30_5_1"/>
<dbReference type="InParanoid" id="O04036"/>
<dbReference type="OMA" id="IWRFPVA"/>
<dbReference type="PhylomeDB" id="O04036"/>
<dbReference type="PRO" id="PR:O04036"/>
<dbReference type="Proteomes" id="UP000006548">
    <property type="component" value="Chromosome 1"/>
</dbReference>
<dbReference type="ExpressionAtlas" id="O04036">
    <property type="expression patterns" value="baseline and differential"/>
</dbReference>
<dbReference type="GO" id="GO:0005783">
    <property type="term" value="C:endoplasmic reticulum"/>
    <property type="evidence" value="ECO:0007005"/>
    <property type="project" value="TAIR"/>
</dbReference>
<dbReference type="GO" id="GO:0016020">
    <property type="term" value="C:membrane"/>
    <property type="evidence" value="ECO:0007669"/>
    <property type="project" value="UniProtKB-SubCell"/>
</dbReference>
<dbReference type="GO" id="GO:0051119">
    <property type="term" value="F:sugar transmembrane transporter activity"/>
    <property type="evidence" value="ECO:0000250"/>
    <property type="project" value="TAIR"/>
</dbReference>
<dbReference type="GO" id="GO:0009737">
    <property type="term" value="P:response to abscisic acid"/>
    <property type="evidence" value="ECO:0000270"/>
    <property type="project" value="TAIR"/>
</dbReference>
<dbReference type="GO" id="GO:0009409">
    <property type="term" value="P:response to cold"/>
    <property type="evidence" value="ECO:0000314"/>
    <property type="project" value="UniProtKB"/>
</dbReference>
<dbReference type="GO" id="GO:0009651">
    <property type="term" value="P:response to salt stress"/>
    <property type="evidence" value="ECO:0000270"/>
    <property type="project" value="TAIR"/>
</dbReference>
<dbReference type="GO" id="GO:0009414">
    <property type="term" value="P:response to water deprivation"/>
    <property type="evidence" value="ECO:0000314"/>
    <property type="project" value="UniProtKB"/>
</dbReference>
<dbReference type="CDD" id="cd17358">
    <property type="entry name" value="MFS_GLUT6_8_Class3_like"/>
    <property type="match status" value="1"/>
</dbReference>
<dbReference type="FunFam" id="1.20.1250.20:FF:000043">
    <property type="entry name" value="sugar transporter ERD6-like 6"/>
    <property type="match status" value="1"/>
</dbReference>
<dbReference type="Gene3D" id="1.20.1250.20">
    <property type="entry name" value="MFS general substrate transporter like domains"/>
    <property type="match status" value="1"/>
</dbReference>
<dbReference type="InterPro" id="IPR020846">
    <property type="entry name" value="MFS_dom"/>
</dbReference>
<dbReference type="InterPro" id="IPR044775">
    <property type="entry name" value="MFS_ERD6/Tret1-like"/>
</dbReference>
<dbReference type="InterPro" id="IPR005828">
    <property type="entry name" value="MFS_sugar_transport-like"/>
</dbReference>
<dbReference type="InterPro" id="IPR036259">
    <property type="entry name" value="MFS_trans_sf"/>
</dbReference>
<dbReference type="InterPro" id="IPR050549">
    <property type="entry name" value="MFS_Trehalose_Transporter"/>
</dbReference>
<dbReference type="InterPro" id="IPR003663">
    <property type="entry name" value="Sugar/inositol_transpt"/>
</dbReference>
<dbReference type="InterPro" id="IPR005829">
    <property type="entry name" value="Sugar_transporter_CS"/>
</dbReference>
<dbReference type="NCBIfam" id="TIGR00879">
    <property type="entry name" value="SP"/>
    <property type="match status" value="1"/>
</dbReference>
<dbReference type="PANTHER" id="PTHR48021">
    <property type="match status" value="1"/>
</dbReference>
<dbReference type="PANTHER" id="PTHR48021:SF40">
    <property type="entry name" value="SUGAR TRANSPORTER ERD6"/>
    <property type="match status" value="1"/>
</dbReference>
<dbReference type="Pfam" id="PF00083">
    <property type="entry name" value="Sugar_tr"/>
    <property type="match status" value="1"/>
</dbReference>
<dbReference type="PRINTS" id="PR00171">
    <property type="entry name" value="SUGRTRNSPORT"/>
</dbReference>
<dbReference type="SUPFAM" id="SSF103473">
    <property type="entry name" value="MFS general substrate transporter"/>
    <property type="match status" value="1"/>
</dbReference>
<dbReference type="PROSITE" id="PS50850">
    <property type="entry name" value="MFS"/>
    <property type="match status" value="1"/>
</dbReference>
<dbReference type="PROSITE" id="PS00217">
    <property type="entry name" value="SUGAR_TRANSPORT_2"/>
    <property type="match status" value="1"/>
</dbReference>